<comment type="function">
    <text evidence="2 3">Tubulin-folding protein involved in the control of the alpha-/beta-tubulin monomer balance. Functions as a reservoir of bound and non-toxic beta-tubulin. Required in the developing embryo.</text>
</comment>
<comment type="subunit">
    <text evidence="4">Monomer. Supercomplex made of cofactors A to E. Cofactors A and D function by capturing and stabilizing tubulin in a quasi-native conformation. Cofactor E binds to the cofactor D-tubulin complex; interaction with cofactor C then causes the release of tubulin polypeptides that are committed to the native state. Interacts with TUBB9.</text>
</comment>
<comment type="interaction">
    <interactant intactId="EBI-1999365">
        <id>O04350</id>
    </interactant>
    <interactant intactId="EBI-2000198">
        <id>P29517</id>
        <label>TUBB9</label>
    </interactant>
    <organismsDiffer>false</organismsDiffer>
    <experiments>5</experiments>
</comment>
<comment type="tissue specificity">
    <text evidence="3">Expressed in leaves, roots, flowers and stems.</text>
</comment>
<comment type="disruption phenotype">
    <text evidence="2">Embryo lethality. Embryos consisting of variably enlarged cells with cell-wall stubs. Abnormal microtubule organization. Endosperm indistinguishable from wild-type endosperm in regard to nuclear multiplication and subsequent cellularization. Cells undergoing cytokinesis divide abnormally although they display pheragmoplast microtubules and accumulate KNOLLE in the forming cell plate.</text>
</comment>
<comment type="similarity">
    <text evidence="5">Belongs to the TBCA family.</text>
</comment>
<feature type="chain" id="PRO_0000080043" description="Tubulin-folding cofactor A">
    <location>
        <begin position="1"/>
        <end position="113"/>
    </location>
</feature>
<feature type="region of interest" description="Disordered" evidence="1">
    <location>
        <begin position="83"/>
        <end position="113"/>
    </location>
</feature>
<feature type="compositionally biased region" description="Basic and acidic residues" evidence="1">
    <location>
        <begin position="89"/>
        <end position="113"/>
    </location>
</feature>
<feature type="mutagenesis site" description="No effect on beta-tubulin binding." evidence="4">
    <original>R</original>
    <variation>A</variation>
    <location>
        <position position="5"/>
    </location>
</feature>
<feature type="mutagenesis site" description="No effect on beta-tubulin binding." evidence="4">
    <original>I</original>
    <variation>A</variation>
    <location>
        <position position="9"/>
    </location>
</feature>
<feature type="mutagenesis site" description="No effect on beta-tubulin binding." evidence="4">
    <original>R</original>
    <variation>A</variation>
    <location>
        <position position="16"/>
    </location>
</feature>
<feature type="mutagenesis site" description="Loss of beta-tubulin binding." evidence="4">
    <original>E</original>
    <variation>A</variation>
    <location>
        <position position="20"/>
    </location>
</feature>
<feature type="mutagenesis site" description="Slight decrease of beta-tubulin binding." evidence="4">
    <original>E</original>
    <variation>Q</variation>
    <location>
        <position position="20"/>
    </location>
</feature>
<feature type="mutagenesis site" description="Decreased beta-tubulin binding; when associated with A-23." evidence="4">
    <original>H</original>
    <variation>A</variation>
    <location>
        <position position="22"/>
    </location>
</feature>
<feature type="mutagenesis site" description="Decreased beta-tubulin binding; when associated with A-22." evidence="4">
    <original>S</original>
    <variation>A</variation>
    <location>
        <position position="23"/>
    </location>
</feature>
<feature type="mutagenesis site" description="Loss of beta-tubulin binding." evidence="4">
    <original>Y</original>
    <variation>A</variation>
    <location>
        <position position="24"/>
    </location>
</feature>
<feature type="mutagenesis site" description="Slight decrease of beta-tubulin binding." evidence="4">
    <original>Y</original>
    <variation>F</variation>
    <location>
        <position position="24"/>
    </location>
</feature>
<feature type="mutagenesis site" description="No effect on beta-tubulin binding; when associated with A-26." evidence="4">
    <original>E</original>
    <variation>A</variation>
    <location>
        <position position="25"/>
    </location>
</feature>
<feature type="mutagenesis site" description="No effect on beta-tubulin binding; when associated with A-25." evidence="4">
    <original>K</original>
    <variation>A</variation>
    <location>
        <position position="26"/>
    </location>
</feature>
<feature type="mutagenesis site" description="Decreased beta-tubulin binding; when associated with A-30." evidence="4">
    <original>E</original>
    <variation>A</variation>
    <location>
        <position position="29"/>
    </location>
</feature>
<feature type="mutagenesis site" description="Decreased beta-tubulin binding; when associated with A-29." evidence="4">
    <original>R</original>
    <variation>A</variation>
    <location>
        <position position="30"/>
    </location>
</feature>
<feature type="mutagenesis site" description="Decreased beta-tubulin binding; when associated with A-50." evidence="4">
    <original>K</original>
    <variation>A</variation>
    <location>
        <position position="49"/>
    </location>
</feature>
<feature type="mutagenesis site" description="Decreased beta-tubulin binding; when associated with A-49." evidence="4">
    <original>Q</original>
    <variation>A</variation>
    <location>
        <position position="50"/>
    </location>
</feature>
<feature type="mutagenesis site" description="No effect on beta-tubulin binding." evidence="4">
    <original>N</original>
    <variation>A</variation>
    <location>
        <position position="53"/>
    </location>
</feature>
<feature type="mutagenesis site" description="No effect on beta-tubulin binding." evidence="4">
    <original>V</original>
    <variation>A</variation>
    <location>
        <position position="54"/>
    </location>
</feature>
<feature type="mutagenesis site" description="Loss of beta-tubulin binding.">
    <original>E</original>
    <variation>A</variation>
    <location>
        <position position="57"/>
    </location>
</feature>
<feature type="mutagenesis site" description="No effect on beta-tubulin binding." evidence="4">
    <original>R</original>
    <variation>A</variation>
    <location>
        <position position="59"/>
    </location>
</feature>
<feature type="mutagenesis site" description="Decreased beta-tubulin binding." evidence="4">
    <original>D</original>
    <variation>A</variation>
    <location>
        <position position="64"/>
    </location>
</feature>
<feature type="mutagenesis site" description="Increased beta-tubulin binding." evidence="4">
    <original>C</original>
    <variation>A</variation>
    <location>
        <position position="65"/>
    </location>
</feature>
<feature type="helix" evidence="6">
    <location>
        <begin position="1"/>
        <end position="40"/>
    </location>
</feature>
<feature type="helix" evidence="6">
    <location>
        <begin position="45"/>
        <end position="84"/>
    </location>
</feature>
<feature type="helix" evidence="6">
    <location>
        <begin position="92"/>
        <end position="105"/>
    </location>
</feature>
<proteinExistence type="evidence at protein level"/>
<sequence>MATIRNLKIKTSTCKRIVKELHSYEKEVEREAAKTADMKDKGADPYDLKQQENVLGESRMMIPDCHKRLESALADLKSTLAELEETDEKEGPEIEDAKKTVADVEKQFPTEDA</sequence>
<gene>
    <name type="primary">TFCA</name>
    <name type="synonym">KIS</name>
    <name type="ordered locus">At2g30410</name>
    <name type="ORF">T06B20.22</name>
    <name type="ORF">T09D09.22</name>
</gene>
<protein>
    <recommendedName>
        <fullName>Tubulin-folding cofactor A</fullName>
        <shortName>AtTFCA</shortName>
        <shortName>CFA</shortName>
    </recommendedName>
    <alternativeName>
        <fullName>Protein KIESEL</fullName>
    </alternativeName>
    <alternativeName>
        <fullName>TCP1-chaperonin cofactor A</fullName>
    </alternativeName>
    <alternativeName>
        <fullName>Tubulin-specific chaperone A</fullName>
    </alternativeName>
</protein>
<name>TBCA_ARATH</name>
<organism>
    <name type="scientific">Arabidopsis thaliana</name>
    <name type="common">Mouse-ear cress</name>
    <dbReference type="NCBI Taxonomy" id="3702"/>
    <lineage>
        <taxon>Eukaryota</taxon>
        <taxon>Viridiplantae</taxon>
        <taxon>Streptophyta</taxon>
        <taxon>Embryophyta</taxon>
        <taxon>Tracheophyta</taxon>
        <taxon>Spermatophyta</taxon>
        <taxon>Magnoliopsida</taxon>
        <taxon>eudicotyledons</taxon>
        <taxon>Gunneridae</taxon>
        <taxon>Pentapetalae</taxon>
        <taxon>rosids</taxon>
        <taxon>malvids</taxon>
        <taxon>Brassicales</taxon>
        <taxon>Brassicaceae</taxon>
        <taxon>Camelineae</taxon>
        <taxon>Arabidopsis</taxon>
    </lineage>
</organism>
<evidence type="ECO:0000256" key="1">
    <source>
        <dbReference type="SAM" id="MobiDB-lite"/>
    </source>
</evidence>
<evidence type="ECO:0000269" key="2">
    <source>
    </source>
</evidence>
<evidence type="ECO:0000269" key="3">
    <source>
    </source>
</evidence>
<evidence type="ECO:0000269" key="4">
    <source>
    </source>
</evidence>
<evidence type="ECO:0000305" key="5"/>
<evidence type="ECO:0007829" key="6">
    <source>
        <dbReference type="PDB" id="3MXZ"/>
    </source>
</evidence>
<accession>O04350</accession>
<accession>Q547H3</accession>
<accession>Q949R2</accession>
<reference key="1">
    <citation type="journal article" date="2002" name="Genes Dev.">
        <title>The Arabidopsis PILZ group genes encode tubulin-folding cofactor orthologs required for cell division but not cell growth.</title>
        <authorList>
            <person name="Steinborn K."/>
            <person name="Maulbetsch C."/>
            <person name="Priester B."/>
            <person name="Trautmann S."/>
            <person name="Pacher T."/>
            <person name="Geiges B."/>
            <person name="Kuettner F."/>
            <person name="Lepiniec L."/>
            <person name="Stierhof Y.-D."/>
            <person name="Schwarz H."/>
            <person name="Juergens G."/>
            <person name="Mayer U."/>
        </authorList>
    </citation>
    <scope>NUCLEOTIDE SEQUENCE [MRNA]</scope>
    <scope>FUNCTION</scope>
    <scope>DISRUPTION PHENOTYPE</scope>
    <source>
        <strain>cv. Landsberg erecta</strain>
        <strain>cv. Wassilewskija</strain>
        <tissue>Flower</tissue>
    </source>
</reference>
<reference key="2">
    <citation type="journal article" date="1999" name="Nature">
        <title>Sequence and analysis of chromosome 2 of the plant Arabidopsis thaliana.</title>
        <authorList>
            <person name="Lin X."/>
            <person name="Kaul S."/>
            <person name="Rounsley S.D."/>
            <person name="Shea T.P."/>
            <person name="Benito M.-I."/>
            <person name="Town C.D."/>
            <person name="Fujii C.Y."/>
            <person name="Mason T.M."/>
            <person name="Bowman C.L."/>
            <person name="Barnstead M.E."/>
            <person name="Feldblyum T.V."/>
            <person name="Buell C.R."/>
            <person name="Ketchum K.A."/>
            <person name="Lee J.J."/>
            <person name="Ronning C.M."/>
            <person name="Koo H.L."/>
            <person name="Moffat K.S."/>
            <person name="Cronin L.A."/>
            <person name="Shen M."/>
            <person name="Pai G."/>
            <person name="Van Aken S."/>
            <person name="Umayam L."/>
            <person name="Tallon L.J."/>
            <person name="Gill J.E."/>
            <person name="Adams M.D."/>
            <person name="Carrera A.J."/>
            <person name="Creasy T.H."/>
            <person name="Goodman H.M."/>
            <person name="Somerville C.R."/>
            <person name="Copenhaver G.P."/>
            <person name="Preuss D."/>
            <person name="Nierman W.C."/>
            <person name="White O."/>
            <person name="Eisen J.A."/>
            <person name="Salzberg S.L."/>
            <person name="Fraser C.M."/>
            <person name="Venter J.C."/>
        </authorList>
    </citation>
    <scope>NUCLEOTIDE SEQUENCE [LARGE SCALE GENOMIC DNA]</scope>
    <source>
        <strain>cv. Columbia</strain>
    </source>
</reference>
<reference key="3">
    <citation type="journal article" date="2017" name="Plant J.">
        <title>Araport11: a complete reannotation of the Arabidopsis thaliana reference genome.</title>
        <authorList>
            <person name="Cheng C.Y."/>
            <person name="Krishnakumar V."/>
            <person name="Chan A.P."/>
            <person name="Thibaud-Nissen F."/>
            <person name="Schobel S."/>
            <person name="Town C.D."/>
        </authorList>
    </citation>
    <scope>GENOME REANNOTATION</scope>
    <source>
        <strain>cv. Columbia</strain>
    </source>
</reference>
<reference key="4">
    <citation type="journal article" date="2003" name="Science">
        <title>Empirical analysis of transcriptional activity in the Arabidopsis genome.</title>
        <authorList>
            <person name="Yamada K."/>
            <person name="Lim J."/>
            <person name="Dale J.M."/>
            <person name="Chen H."/>
            <person name="Shinn P."/>
            <person name="Palm C.J."/>
            <person name="Southwick A.M."/>
            <person name="Wu H.C."/>
            <person name="Kim C.J."/>
            <person name="Nguyen M."/>
            <person name="Pham P.K."/>
            <person name="Cheuk R.F."/>
            <person name="Karlin-Newmann G."/>
            <person name="Liu S.X."/>
            <person name="Lam B."/>
            <person name="Sakano H."/>
            <person name="Wu T."/>
            <person name="Yu G."/>
            <person name="Miranda M."/>
            <person name="Quach H.L."/>
            <person name="Tripp M."/>
            <person name="Chang C.H."/>
            <person name="Lee J.M."/>
            <person name="Toriumi M.J."/>
            <person name="Chan M.M."/>
            <person name="Tang C.C."/>
            <person name="Onodera C.S."/>
            <person name="Deng J.M."/>
            <person name="Akiyama K."/>
            <person name="Ansari Y."/>
            <person name="Arakawa T."/>
            <person name="Banh J."/>
            <person name="Banno F."/>
            <person name="Bowser L."/>
            <person name="Brooks S.Y."/>
            <person name="Carninci P."/>
            <person name="Chao Q."/>
            <person name="Choy N."/>
            <person name="Enju A."/>
            <person name="Goldsmith A.D."/>
            <person name="Gurjal M."/>
            <person name="Hansen N.F."/>
            <person name="Hayashizaki Y."/>
            <person name="Johnson-Hopson C."/>
            <person name="Hsuan V.W."/>
            <person name="Iida K."/>
            <person name="Karnes M."/>
            <person name="Khan S."/>
            <person name="Koesema E."/>
            <person name="Ishida J."/>
            <person name="Jiang P.X."/>
            <person name="Jones T."/>
            <person name="Kawai J."/>
            <person name="Kamiya A."/>
            <person name="Meyers C."/>
            <person name="Nakajima M."/>
            <person name="Narusaka M."/>
            <person name="Seki M."/>
            <person name="Sakurai T."/>
            <person name="Satou M."/>
            <person name="Tamse R."/>
            <person name="Vaysberg M."/>
            <person name="Wallender E.K."/>
            <person name="Wong C."/>
            <person name="Yamamura Y."/>
            <person name="Yuan S."/>
            <person name="Shinozaki K."/>
            <person name="Davis R.W."/>
            <person name="Theologis A."/>
            <person name="Ecker J.R."/>
        </authorList>
    </citation>
    <scope>NUCLEOTIDE SEQUENCE [LARGE SCALE MRNA]</scope>
    <source>
        <strain>cv. Columbia</strain>
    </source>
</reference>
<reference key="5">
    <citation type="submission" date="2002-03" db="EMBL/GenBank/DDBJ databases">
        <title>Full-length cDNA from Arabidopsis thaliana.</title>
        <authorList>
            <person name="Brover V.V."/>
            <person name="Troukhan M.E."/>
            <person name="Alexandrov N.A."/>
            <person name="Lu Y.-P."/>
            <person name="Flavell R.B."/>
            <person name="Feldmann K.A."/>
        </authorList>
    </citation>
    <scope>NUCLEOTIDE SEQUENCE [LARGE SCALE MRNA]</scope>
</reference>
<reference key="6">
    <citation type="journal article" date="2002" name="Plant Cell">
        <title>The Arabidopsis TUBULIN-FOLDING COFACTOR A gene is involved in the control of the alpha/beta-tubulin monomer balance.</title>
        <authorList>
            <person name="Kirik V."/>
            <person name="Grini P.E."/>
            <person name="Mathur J."/>
            <person name="Klinkhammer I."/>
            <person name="Adler K."/>
            <person name="Bechtold N."/>
            <person name="Herzog M."/>
            <person name="Bonneville J.M."/>
            <person name="Huelskamp M."/>
        </authorList>
    </citation>
    <scope>FUNCTION</scope>
    <scope>TISSUE SPECIFICITY</scope>
</reference>
<reference key="7">
    <citation type="journal article" date="2010" name="FEBS Lett.">
        <title>Crystal structure of tubulin folding cofactor A from Arabidopsis thaliana and its beta-tubulin binding characterization.</title>
        <authorList>
            <person name="Lu L."/>
            <person name="Nan J."/>
            <person name="Mi W."/>
            <person name="Li L.F."/>
            <person name="Wei C.H."/>
            <person name="Su X.D."/>
            <person name="Li Y."/>
        </authorList>
    </citation>
    <scope>X-RAY CRYSTALLOGRAPHY (1.60 ANGSTROMS)</scope>
    <scope>SUBUNIT</scope>
    <scope>INTERACTION WITH TUBB9</scope>
    <scope>MUTAGENESIS OF ARG-5; ILE-9; ARG-16; GLU-20; HIS-22; SER-23; TYR-24; GLU-25; LYS-26; GLU-29; ARG-30; LYS-49; GLN-50; ASN-53; VAL-54; ARG-59; ASP-64 AND CYS-65</scope>
</reference>
<dbReference type="EMBL" id="AF486848">
    <property type="protein sequence ID" value="AAM22957.1"/>
    <property type="molecule type" value="mRNA"/>
</dbReference>
<dbReference type="EMBL" id="AC002338">
    <property type="protein sequence ID" value="AAM14821.1"/>
    <property type="molecule type" value="Genomic_DNA"/>
</dbReference>
<dbReference type="EMBL" id="U93215">
    <property type="protein sequence ID" value="AAB63093.2"/>
    <property type="molecule type" value="Genomic_DNA"/>
</dbReference>
<dbReference type="EMBL" id="CP002685">
    <property type="protein sequence ID" value="AEC08383.1"/>
    <property type="molecule type" value="Genomic_DNA"/>
</dbReference>
<dbReference type="EMBL" id="CP002685">
    <property type="protein sequence ID" value="AEC08384.1"/>
    <property type="molecule type" value="Genomic_DNA"/>
</dbReference>
<dbReference type="EMBL" id="CP002685">
    <property type="protein sequence ID" value="ANM61960.1"/>
    <property type="molecule type" value="Genomic_DNA"/>
</dbReference>
<dbReference type="EMBL" id="AY050952">
    <property type="protein sequence ID" value="AAK93629.1"/>
    <property type="molecule type" value="mRNA"/>
</dbReference>
<dbReference type="EMBL" id="AY091344">
    <property type="protein sequence ID" value="AAM14283.1"/>
    <property type="molecule type" value="mRNA"/>
</dbReference>
<dbReference type="EMBL" id="AY085814">
    <property type="protein sequence ID" value="AAM63030.1"/>
    <property type="molecule type" value="mRNA"/>
</dbReference>
<dbReference type="PIR" id="B84708">
    <property type="entry name" value="B84708"/>
</dbReference>
<dbReference type="RefSeq" id="NP_001189640.1">
    <property type="nucleotide sequence ID" value="NM_001202711.2"/>
</dbReference>
<dbReference type="RefSeq" id="NP_001318319.1">
    <property type="nucleotide sequence ID" value="NM_001336255.1"/>
</dbReference>
<dbReference type="RefSeq" id="NP_565699.1">
    <property type="nucleotide sequence ID" value="NM_128594.4"/>
</dbReference>
<dbReference type="PDB" id="3MXZ">
    <property type="method" value="X-ray"/>
    <property type="resolution" value="1.60 A"/>
    <property type="chains" value="A=1-113"/>
</dbReference>
<dbReference type="PDBsum" id="3MXZ"/>
<dbReference type="SMR" id="O04350"/>
<dbReference type="BioGRID" id="2941">
    <property type="interactions" value="2"/>
</dbReference>
<dbReference type="FunCoup" id="O04350">
    <property type="interactions" value="3014"/>
</dbReference>
<dbReference type="IntAct" id="O04350">
    <property type="interactions" value="2"/>
</dbReference>
<dbReference type="MINT" id="O04350"/>
<dbReference type="STRING" id="3702.O04350"/>
<dbReference type="PaxDb" id="3702-AT2G30410.2"/>
<dbReference type="ProteomicsDB" id="246453"/>
<dbReference type="EnsemblPlants" id="AT2G30410.1">
    <property type="protein sequence ID" value="AT2G30410.1"/>
    <property type="gene ID" value="AT2G30410"/>
</dbReference>
<dbReference type="EnsemblPlants" id="AT2G30410.2">
    <property type="protein sequence ID" value="AT2G30410.2"/>
    <property type="gene ID" value="AT2G30410"/>
</dbReference>
<dbReference type="EnsemblPlants" id="AT2G30410.3">
    <property type="protein sequence ID" value="AT2G30410.3"/>
    <property type="gene ID" value="AT2G30410"/>
</dbReference>
<dbReference type="GeneID" id="817592"/>
<dbReference type="Gramene" id="AT2G30410.1">
    <property type="protein sequence ID" value="AT2G30410.1"/>
    <property type="gene ID" value="AT2G30410"/>
</dbReference>
<dbReference type="Gramene" id="AT2G30410.2">
    <property type="protein sequence ID" value="AT2G30410.2"/>
    <property type="gene ID" value="AT2G30410"/>
</dbReference>
<dbReference type="Gramene" id="AT2G30410.3">
    <property type="protein sequence ID" value="AT2G30410.3"/>
    <property type="gene ID" value="AT2G30410"/>
</dbReference>
<dbReference type="KEGG" id="ath:AT2G30410"/>
<dbReference type="Araport" id="AT2G30410"/>
<dbReference type="TAIR" id="AT2G30410">
    <property type="gene designation" value="KIS"/>
</dbReference>
<dbReference type="eggNOG" id="KOG3470">
    <property type="taxonomic scope" value="Eukaryota"/>
</dbReference>
<dbReference type="HOGENOM" id="CLU_130569_1_2_1"/>
<dbReference type="InParanoid" id="O04350"/>
<dbReference type="OMA" id="VIQECIM"/>
<dbReference type="PhylomeDB" id="O04350"/>
<dbReference type="EvolutionaryTrace" id="O04350"/>
<dbReference type="PRO" id="PR:O04350"/>
<dbReference type="Proteomes" id="UP000006548">
    <property type="component" value="Chromosome 2"/>
</dbReference>
<dbReference type="ExpressionAtlas" id="O04350">
    <property type="expression patterns" value="baseline and differential"/>
</dbReference>
<dbReference type="GO" id="GO:0005829">
    <property type="term" value="C:cytosol"/>
    <property type="evidence" value="ECO:0007005"/>
    <property type="project" value="TAIR"/>
</dbReference>
<dbReference type="GO" id="GO:0005777">
    <property type="term" value="C:peroxisome"/>
    <property type="evidence" value="ECO:0007005"/>
    <property type="project" value="TAIR"/>
</dbReference>
<dbReference type="GO" id="GO:0048487">
    <property type="term" value="F:beta-tubulin binding"/>
    <property type="evidence" value="ECO:0007669"/>
    <property type="project" value="InterPro"/>
</dbReference>
<dbReference type="GO" id="GO:0007023">
    <property type="term" value="P:post-chaperonin tubulin folding pathway"/>
    <property type="evidence" value="ECO:0007669"/>
    <property type="project" value="InterPro"/>
</dbReference>
<dbReference type="GO" id="GO:0007021">
    <property type="term" value="P:tubulin complex assembly"/>
    <property type="evidence" value="ECO:0007669"/>
    <property type="project" value="InterPro"/>
</dbReference>
<dbReference type="FunFam" id="1.20.58.90:FF:000011">
    <property type="entry name" value="Tubulin-specific chaperone A"/>
    <property type="match status" value="1"/>
</dbReference>
<dbReference type="Gene3D" id="1.20.58.90">
    <property type="match status" value="1"/>
</dbReference>
<dbReference type="InterPro" id="IPR004226">
    <property type="entry name" value="TBCA"/>
</dbReference>
<dbReference type="InterPro" id="IPR036126">
    <property type="entry name" value="TBCA_sf"/>
</dbReference>
<dbReference type="PANTHER" id="PTHR21500">
    <property type="entry name" value="TUBULIN-SPECIFIC CHAPERONE A"/>
    <property type="match status" value="1"/>
</dbReference>
<dbReference type="PANTHER" id="PTHR21500:SF0">
    <property type="entry name" value="TUBULIN-SPECIFIC CHAPERONE A"/>
    <property type="match status" value="1"/>
</dbReference>
<dbReference type="Pfam" id="PF02970">
    <property type="entry name" value="TBCA"/>
    <property type="match status" value="1"/>
</dbReference>
<dbReference type="SUPFAM" id="SSF46988">
    <property type="entry name" value="Tubulin chaperone cofactor A"/>
    <property type="match status" value="1"/>
</dbReference>
<keyword id="KW-0002">3D-structure</keyword>
<keyword id="KW-0143">Chaperone</keyword>
<keyword id="KW-1185">Reference proteome</keyword>